<reference key="1">
    <citation type="journal article" date="2008" name="J. Bacteriol.">
        <title>The pangenome structure of Escherichia coli: comparative genomic analysis of E. coli commensal and pathogenic isolates.</title>
        <authorList>
            <person name="Rasko D.A."/>
            <person name="Rosovitz M.J."/>
            <person name="Myers G.S.A."/>
            <person name="Mongodin E.F."/>
            <person name="Fricke W.F."/>
            <person name="Gajer P."/>
            <person name="Crabtree J."/>
            <person name="Sebaihia M."/>
            <person name="Thomson N.R."/>
            <person name="Chaudhuri R."/>
            <person name="Henderson I.R."/>
            <person name="Sperandio V."/>
            <person name="Ravel J."/>
        </authorList>
    </citation>
    <scope>NUCLEOTIDE SEQUENCE [LARGE SCALE GENOMIC DNA]</scope>
    <source>
        <strain>E24377A / ETEC</strain>
    </source>
</reference>
<organism>
    <name type="scientific">Escherichia coli O139:H28 (strain E24377A / ETEC)</name>
    <dbReference type="NCBI Taxonomy" id="331111"/>
    <lineage>
        <taxon>Bacteria</taxon>
        <taxon>Pseudomonadati</taxon>
        <taxon>Pseudomonadota</taxon>
        <taxon>Gammaproteobacteria</taxon>
        <taxon>Enterobacterales</taxon>
        <taxon>Enterobacteriaceae</taxon>
        <taxon>Escherichia</taxon>
    </lineage>
</organism>
<accession>A7ZUB2</accession>
<protein>
    <recommendedName>
        <fullName evidence="1">L-rhamnose mutarotase</fullName>
        <ecNumber evidence="1">5.1.3.32</ecNumber>
    </recommendedName>
    <alternativeName>
        <fullName evidence="1">Rhamnose 1-epimerase</fullName>
    </alternativeName>
    <alternativeName>
        <fullName evidence="1">Type-3 mutarotase</fullName>
    </alternativeName>
</protein>
<dbReference type="EC" id="5.1.3.32" evidence="1"/>
<dbReference type="EMBL" id="CP000800">
    <property type="protein sequence ID" value="ABV17851.1"/>
    <property type="molecule type" value="Genomic_DNA"/>
</dbReference>
<dbReference type="RefSeq" id="WP_000619503.1">
    <property type="nucleotide sequence ID" value="NC_009801.1"/>
</dbReference>
<dbReference type="BMRB" id="A7ZUB2"/>
<dbReference type="SMR" id="A7ZUB2"/>
<dbReference type="GeneID" id="93778037"/>
<dbReference type="KEGG" id="ecw:EcE24377A_4432"/>
<dbReference type="HOGENOM" id="CLU_100689_2_0_6"/>
<dbReference type="UniPathway" id="UPA00125"/>
<dbReference type="Proteomes" id="UP000001122">
    <property type="component" value="Chromosome"/>
</dbReference>
<dbReference type="GO" id="GO:0005737">
    <property type="term" value="C:cytoplasm"/>
    <property type="evidence" value="ECO:0007669"/>
    <property type="project" value="UniProtKB-SubCell"/>
</dbReference>
<dbReference type="GO" id="GO:0062192">
    <property type="term" value="F:L-rhamnose mutarotase activity"/>
    <property type="evidence" value="ECO:0007669"/>
    <property type="project" value="UniProtKB-EC"/>
</dbReference>
<dbReference type="GO" id="GO:0019301">
    <property type="term" value="P:rhamnose catabolic process"/>
    <property type="evidence" value="ECO:0007669"/>
    <property type="project" value="TreeGrafter"/>
</dbReference>
<dbReference type="FunFam" id="3.30.70.100:FF:000013">
    <property type="entry name" value="L-rhamnose mutarotase"/>
    <property type="match status" value="1"/>
</dbReference>
<dbReference type="Gene3D" id="3.30.70.100">
    <property type="match status" value="1"/>
</dbReference>
<dbReference type="HAMAP" id="MF_01663">
    <property type="entry name" value="L_rham_rotase"/>
    <property type="match status" value="1"/>
</dbReference>
<dbReference type="InterPro" id="IPR011008">
    <property type="entry name" value="Dimeric_a/b-barrel"/>
</dbReference>
<dbReference type="InterPro" id="IPR013448">
    <property type="entry name" value="L-rhamnose_mutarotase"/>
</dbReference>
<dbReference type="InterPro" id="IPR008000">
    <property type="entry name" value="Rham/fucose_mutarotase"/>
</dbReference>
<dbReference type="NCBIfam" id="TIGR02625">
    <property type="entry name" value="YiiL_rotase"/>
    <property type="match status" value="1"/>
</dbReference>
<dbReference type="PANTHER" id="PTHR34389">
    <property type="entry name" value="L-RHAMNOSE MUTAROTASE"/>
    <property type="match status" value="1"/>
</dbReference>
<dbReference type="PANTHER" id="PTHR34389:SF2">
    <property type="entry name" value="L-RHAMNOSE MUTAROTASE"/>
    <property type="match status" value="1"/>
</dbReference>
<dbReference type="Pfam" id="PF05336">
    <property type="entry name" value="rhaM"/>
    <property type="match status" value="1"/>
</dbReference>
<dbReference type="SUPFAM" id="SSF54909">
    <property type="entry name" value="Dimeric alpha+beta barrel"/>
    <property type="match status" value="1"/>
</dbReference>
<gene>
    <name evidence="1" type="primary">rhaM</name>
    <name type="ordered locus">EcE24377A_4432</name>
</gene>
<sequence length="104" mass="12235">MIRKAFVMQVNPDAHEEYQRRHNPIWPELEAVLKSHGAHNYAIYLDKARNLLFATVEIESEERWNAVASTDVCQRWWKYMTDVMPANPDNSPVSSELQEVFYLP</sequence>
<evidence type="ECO:0000255" key="1">
    <source>
        <dbReference type="HAMAP-Rule" id="MF_01663"/>
    </source>
</evidence>
<proteinExistence type="inferred from homology"/>
<name>RHAM_ECO24</name>
<comment type="function">
    <text evidence="1">Involved in the anomeric conversion of L-rhamnose.</text>
</comment>
<comment type="catalytic activity">
    <reaction evidence="1">
        <text>alpha-L-rhamnose = beta-L-rhamnose</text>
        <dbReference type="Rhea" id="RHEA:25584"/>
        <dbReference type="ChEBI" id="CHEBI:27586"/>
        <dbReference type="ChEBI" id="CHEBI:27907"/>
        <dbReference type="EC" id="5.1.3.32"/>
    </reaction>
</comment>
<comment type="pathway">
    <text evidence="1">Carbohydrate metabolism; L-rhamnose metabolism.</text>
</comment>
<comment type="subunit">
    <text evidence="1">Homodimer.</text>
</comment>
<comment type="subcellular location">
    <subcellularLocation>
        <location evidence="1">Cytoplasm</location>
    </subcellularLocation>
</comment>
<comment type="similarity">
    <text evidence="1">Belongs to the rhamnose mutarotase family.</text>
</comment>
<feature type="chain" id="PRO_0000344573" description="L-rhamnose mutarotase">
    <location>
        <begin position="1"/>
        <end position="104"/>
    </location>
</feature>
<feature type="active site" description="Proton donor" evidence="1">
    <location>
        <position position="22"/>
    </location>
</feature>
<feature type="binding site" evidence="1">
    <location>
        <position position="18"/>
    </location>
    <ligand>
        <name>substrate</name>
    </ligand>
</feature>
<feature type="binding site" evidence="1">
    <location>
        <position position="41"/>
    </location>
    <ligand>
        <name>substrate</name>
    </ligand>
</feature>
<feature type="binding site" evidence="1">
    <location>
        <begin position="76"/>
        <end position="77"/>
    </location>
    <ligand>
        <name>substrate</name>
    </ligand>
</feature>
<keyword id="KW-0119">Carbohydrate metabolism</keyword>
<keyword id="KW-0963">Cytoplasm</keyword>
<keyword id="KW-0413">Isomerase</keyword>
<keyword id="KW-1185">Reference proteome</keyword>
<keyword id="KW-0684">Rhamnose metabolism</keyword>